<organism>
    <name type="scientific">Mycobacterium bovis (strain ATCC BAA-935 / AF2122/97)</name>
    <dbReference type="NCBI Taxonomy" id="233413"/>
    <lineage>
        <taxon>Bacteria</taxon>
        <taxon>Bacillati</taxon>
        <taxon>Actinomycetota</taxon>
        <taxon>Actinomycetes</taxon>
        <taxon>Mycobacteriales</taxon>
        <taxon>Mycobacteriaceae</taxon>
        <taxon>Mycobacterium</taxon>
        <taxon>Mycobacterium tuberculosis complex</taxon>
    </lineage>
</organism>
<name>Y3458_MYCBO</name>
<reference key="1">
    <citation type="journal article" date="2003" name="Proc. Natl. Acad. Sci. U.S.A.">
        <title>The complete genome sequence of Mycobacterium bovis.</title>
        <authorList>
            <person name="Garnier T."/>
            <person name="Eiglmeier K."/>
            <person name="Camus J.-C."/>
            <person name="Medina N."/>
            <person name="Mansoor H."/>
            <person name="Pryor M."/>
            <person name="Duthoy S."/>
            <person name="Grondin S."/>
            <person name="Lacroix C."/>
            <person name="Monsempe C."/>
            <person name="Simon S."/>
            <person name="Harris B."/>
            <person name="Atkin R."/>
            <person name="Doggett J."/>
            <person name="Mayes R."/>
            <person name="Keating L."/>
            <person name="Wheeler P.R."/>
            <person name="Parkhill J."/>
            <person name="Barrell B.G."/>
            <person name="Cole S.T."/>
            <person name="Gordon S.V."/>
            <person name="Hewinson R.G."/>
        </authorList>
    </citation>
    <scope>NUCLEOTIDE SEQUENCE [LARGE SCALE GENOMIC DNA]</scope>
    <source>
        <strain>ATCC BAA-935 / AF2122/97</strain>
    </source>
</reference>
<reference key="2">
    <citation type="journal article" date="2017" name="Genome Announc.">
        <title>Updated reference genome sequence and annotation of Mycobacterium bovis AF2122/97.</title>
        <authorList>
            <person name="Malone K.M."/>
            <person name="Farrell D."/>
            <person name="Stuber T.P."/>
            <person name="Schubert O.T."/>
            <person name="Aebersold R."/>
            <person name="Robbe-Austerman S."/>
            <person name="Gordon S.V."/>
        </authorList>
    </citation>
    <scope>NUCLEOTIDE SEQUENCE [LARGE SCALE GENOMIC DNA]</scope>
    <scope>GENOME REANNOTATION</scope>
    <source>
        <strain>ATCC BAA-935 / AF2122/97</strain>
    </source>
</reference>
<proteinExistence type="predicted"/>
<dbReference type="EMBL" id="LT708304">
    <property type="protein sequence ID" value="SIU02086.1"/>
    <property type="molecule type" value="Genomic_DNA"/>
</dbReference>
<dbReference type="RefSeq" id="NP_857098.1">
    <property type="nucleotide sequence ID" value="NC_002945.3"/>
</dbReference>
<dbReference type="RefSeq" id="WP_003904310.1">
    <property type="nucleotide sequence ID" value="NC_002945.4"/>
</dbReference>
<dbReference type="KEGG" id="mbo:BQ2027_MB3458C"/>
<dbReference type="PATRIC" id="fig|233413.5.peg.3793"/>
<dbReference type="Proteomes" id="UP000001419">
    <property type="component" value="Chromosome"/>
</dbReference>
<protein>
    <recommendedName>
        <fullName>Uncharacterized protein Mb3458c</fullName>
    </recommendedName>
</protein>
<keyword id="KW-1185">Reference proteome</keyword>
<gene>
    <name type="ordered locus">BQ2027_MB3458C</name>
</gene>
<feature type="chain" id="PRO_0000104136" description="Uncharacterized protein Mb3458c">
    <location>
        <begin position="1"/>
        <end position="120"/>
    </location>
</feature>
<accession>P65086</accession>
<accession>A0A1R3Y4U5</accession>
<accession>Q50704</accession>
<accession>X2BNE5</accession>
<sequence length="120" mass="13018">MPNPVTMLYGRKADLVILPHVLAEERPHPYSTPGRKRGAQIALTTGIDALASFAPQIVNPRHGLSRVVQCLGGCENKRHAYFRSISKTPHIRARGVPSVCAVRTVGVDGAKRPPKPIPVQ</sequence>